<keyword id="KW-0156">Chromatin regulator</keyword>
<keyword id="KW-0539">Nucleus</keyword>
<keyword id="KW-1185">Reference proteome</keyword>
<keyword id="KW-0677">Repeat</keyword>
<keyword id="KW-0678">Repressor</keyword>
<keyword id="KW-0804">Transcription</keyword>
<keyword id="KW-0805">Transcription regulation</keyword>
<keyword id="KW-0853">WD repeat</keyword>
<comment type="function">
    <text evidence="1">Required for replication-independent chromatin assembly and for the periodic repression of histone gene transcription during the cell cycle.</text>
</comment>
<comment type="subcellular location">
    <subcellularLocation>
        <location evidence="1">Nucleus</location>
    </subcellularLocation>
</comment>
<comment type="similarity">
    <text evidence="3">Belongs to the WD repeat HIR1 family.</text>
</comment>
<proteinExistence type="inferred from homology"/>
<accession>Q6CM99</accession>
<sequence length="847" mass="95720">MKLLKLPSKLHDGQLTQCEVDDNKLYIIGGKYLSIWDSQTLLNAATGKTDVKEVKELEKMSLDLLESNQEDGRWLVVLDNQRLVYGSDHLLACLDLNKDSNSEYKSREIGIFKDNEAITDLKYDKVNGLLFVSLSKANSLQIMDSKTWELKSSIELKSKPISIITDPLGQLLTVILQNRSVQIYQYDSHGTTKLHQSINQFVQTNPLPYRMTMSPQGDVIPMINSLHNNVPTAVLLDRIQKFKIKLSLVGYVADCKILKFSPRIYSKTKSPTSNDTQTFNLLASSGNEDGNVVVWNTNRIKPLFDASKVVNSYITDLEWDNSGLGLFAISQDGQLVIFAFQENELGDVMPVEAVTEAAKEIKLLDPLPFKPKAEEPDTKLPPNKTAQQTTTNSKKQPKAAEITTISSTNMEFIQPSYMVPKDLKRKPVTEDPLLAQNKPANKKAKKELDQIDFLDTNLFLPSVSFSKVRLAHPKIRASFQYSSQGNFVLDIKNGLGNDQKPTSITLTRKDNESSKQLFQTFLPKFVTLCSAGSSFWAWSTDTGMIYVTSISGQMLFPPMLLGVPVSFLEGSGDYLLCITSIGQMYCWNVNTGKIAFPINDVYSLLNPMLRYSDDVLSRAENITMCAVTSQGIPIVTLSNGDGYMFDSAMEAWMLINDSWWPYGSQYWNFMSSAGVDLTSNDDEKKDKYWNAEADILAKEVKNNKNSIINYLETKTNDELTRKGRMKHLQRFAKVLLMKEGFENLEEMITLAHLENKILVSFRLKEVEEAIRLLKIYCIRIAEMGYTDRFSQTLSWLYDPTNTKFSPLDIDRRRNLIKDIIISCANIRQVQRVTTSYANELGVISDSL</sequence>
<reference key="1">
    <citation type="journal article" date="2004" name="Nature">
        <title>Genome evolution in yeasts.</title>
        <authorList>
            <person name="Dujon B."/>
            <person name="Sherman D."/>
            <person name="Fischer G."/>
            <person name="Durrens P."/>
            <person name="Casaregola S."/>
            <person name="Lafontaine I."/>
            <person name="de Montigny J."/>
            <person name="Marck C."/>
            <person name="Neuveglise C."/>
            <person name="Talla E."/>
            <person name="Goffard N."/>
            <person name="Frangeul L."/>
            <person name="Aigle M."/>
            <person name="Anthouard V."/>
            <person name="Babour A."/>
            <person name="Barbe V."/>
            <person name="Barnay S."/>
            <person name="Blanchin S."/>
            <person name="Beckerich J.-M."/>
            <person name="Beyne E."/>
            <person name="Bleykasten C."/>
            <person name="Boisrame A."/>
            <person name="Boyer J."/>
            <person name="Cattolico L."/>
            <person name="Confanioleri F."/>
            <person name="de Daruvar A."/>
            <person name="Despons L."/>
            <person name="Fabre E."/>
            <person name="Fairhead C."/>
            <person name="Ferry-Dumazet H."/>
            <person name="Groppi A."/>
            <person name="Hantraye F."/>
            <person name="Hennequin C."/>
            <person name="Jauniaux N."/>
            <person name="Joyet P."/>
            <person name="Kachouri R."/>
            <person name="Kerrest A."/>
            <person name="Koszul R."/>
            <person name="Lemaire M."/>
            <person name="Lesur I."/>
            <person name="Ma L."/>
            <person name="Muller H."/>
            <person name="Nicaud J.-M."/>
            <person name="Nikolski M."/>
            <person name="Oztas S."/>
            <person name="Ozier-Kalogeropoulos O."/>
            <person name="Pellenz S."/>
            <person name="Potier S."/>
            <person name="Richard G.-F."/>
            <person name="Straub M.-L."/>
            <person name="Suleau A."/>
            <person name="Swennen D."/>
            <person name="Tekaia F."/>
            <person name="Wesolowski-Louvel M."/>
            <person name="Westhof E."/>
            <person name="Wirth B."/>
            <person name="Zeniou-Meyer M."/>
            <person name="Zivanovic Y."/>
            <person name="Bolotin-Fukuhara M."/>
            <person name="Thierry A."/>
            <person name="Bouchier C."/>
            <person name="Caudron B."/>
            <person name="Scarpelli C."/>
            <person name="Gaillardin C."/>
            <person name="Weissenbach J."/>
            <person name="Wincker P."/>
            <person name="Souciet J.-L."/>
        </authorList>
    </citation>
    <scope>NUCLEOTIDE SEQUENCE [LARGE SCALE GENOMIC DNA]</scope>
    <source>
        <strain>ATCC 8585 / CBS 2359 / DSM 70799 / NBRC 1267 / NRRL Y-1140 / WM37</strain>
    </source>
</reference>
<dbReference type="EMBL" id="CR382125">
    <property type="protein sequence ID" value="CAH00027.1"/>
    <property type="molecule type" value="Genomic_DNA"/>
</dbReference>
<dbReference type="RefSeq" id="XP_454940.1">
    <property type="nucleotide sequence ID" value="XM_454940.1"/>
</dbReference>
<dbReference type="SMR" id="Q6CM99"/>
<dbReference type="FunCoup" id="Q6CM99">
    <property type="interactions" value="497"/>
</dbReference>
<dbReference type="STRING" id="284590.Q6CM99"/>
<dbReference type="PaxDb" id="284590-Q6CM99"/>
<dbReference type="KEGG" id="kla:KLLA0_E21847g"/>
<dbReference type="eggNOG" id="KOG0973">
    <property type="taxonomic scope" value="Eukaryota"/>
</dbReference>
<dbReference type="HOGENOM" id="CLU_004372_1_0_1"/>
<dbReference type="InParanoid" id="Q6CM99"/>
<dbReference type="OMA" id="RGSWDGD"/>
<dbReference type="Proteomes" id="UP000000598">
    <property type="component" value="Chromosome E"/>
</dbReference>
<dbReference type="GO" id="GO:0000785">
    <property type="term" value="C:chromatin"/>
    <property type="evidence" value="ECO:0007669"/>
    <property type="project" value="TreeGrafter"/>
</dbReference>
<dbReference type="GO" id="GO:0000417">
    <property type="term" value="C:HIR complex"/>
    <property type="evidence" value="ECO:0007669"/>
    <property type="project" value="TreeGrafter"/>
</dbReference>
<dbReference type="GO" id="GO:0005634">
    <property type="term" value="C:nucleus"/>
    <property type="evidence" value="ECO:0007669"/>
    <property type="project" value="UniProtKB-SubCell"/>
</dbReference>
<dbReference type="GO" id="GO:0031491">
    <property type="term" value="F:nucleosome binding"/>
    <property type="evidence" value="ECO:0007669"/>
    <property type="project" value="TreeGrafter"/>
</dbReference>
<dbReference type="GO" id="GO:0006338">
    <property type="term" value="P:chromatin remodeling"/>
    <property type="evidence" value="ECO:0007669"/>
    <property type="project" value="InterPro"/>
</dbReference>
<dbReference type="GO" id="GO:0006351">
    <property type="term" value="P:DNA-templated transcription"/>
    <property type="evidence" value="ECO:0007669"/>
    <property type="project" value="InterPro"/>
</dbReference>
<dbReference type="GO" id="GO:0006355">
    <property type="term" value="P:regulation of DNA-templated transcription"/>
    <property type="evidence" value="ECO:0007669"/>
    <property type="project" value="InterPro"/>
</dbReference>
<dbReference type="Gene3D" id="2.130.10.10">
    <property type="entry name" value="YVTN repeat-like/Quinoprotein amine dehydrogenase"/>
    <property type="match status" value="1"/>
</dbReference>
<dbReference type="InterPro" id="IPR031120">
    <property type="entry name" value="HIR1-like"/>
</dbReference>
<dbReference type="InterPro" id="IPR011494">
    <property type="entry name" value="HIRA-like_C"/>
</dbReference>
<dbReference type="InterPro" id="IPR015943">
    <property type="entry name" value="WD40/YVTN_repeat-like_dom_sf"/>
</dbReference>
<dbReference type="InterPro" id="IPR036322">
    <property type="entry name" value="WD40_repeat_dom_sf"/>
</dbReference>
<dbReference type="PANTHER" id="PTHR13831">
    <property type="entry name" value="MEMBER OF THE HIR1 FAMILY OF WD-REPEAT PROTEINS"/>
    <property type="match status" value="1"/>
</dbReference>
<dbReference type="PANTHER" id="PTHR13831:SF1">
    <property type="entry name" value="PROTEIN HIR2"/>
    <property type="match status" value="1"/>
</dbReference>
<dbReference type="Pfam" id="PF07569">
    <property type="entry name" value="Hira"/>
    <property type="match status" value="1"/>
</dbReference>
<dbReference type="SUPFAM" id="SSF50978">
    <property type="entry name" value="WD40 repeat-like"/>
    <property type="match status" value="1"/>
</dbReference>
<dbReference type="PROSITE" id="PS00678">
    <property type="entry name" value="WD_REPEATS_1"/>
    <property type="match status" value="1"/>
</dbReference>
<feature type="chain" id="PRO_0000286422" description="Protein HIR2">
    <location>
        <begin position="1"/>
        <end position="847"/>
    </location>
</feature>
<feature type="repeat" description="WD 1">
    <location>
        <begin position="10"/>
        <end position="46"/>
    </location>
</feature>
<feature type="repeat" description="WD 2">
    <location>
        <begin position="113"/>
        <end position="153"/>
    </location>
</feature>
<feature type="repeat" description="WD 3">
    <location>
        <begin position="155"/>
        <end position="194"/>
    </location>
</feature>
<feature type="repeat" description="WD 4">
    <location>
        <begin position="259"/>
        <end position="305"/>
    </location>
</feature>
<feature type="repeat" description="WD 5">
    <location>
        <begin position="309"/>
        <end position="348"/>
    </location>
</feature>
<feature type="repeat" description="WD 6">
    <location>
        <begin position="508"/>
        <end position="548"/>
    </location>
</feature>
<feature type="repeat" description="WD 7">
    <location>
        <begin position="558"/>
        <end position="597"/>
    </location>
</feature>
<feature type="region of interest" description="Disordered" evidence="2">
    <location>
        <begin position="368"/>
        <end position="399"/>
    </location>
</feature>
<feature type="compositionally biased region" description="Polar residues" evidence="2">
    <location>
        <begin position="384"/>
        <end position="394"/>
    </location>
</feature>
<evidence type="ECO:0000250" key="1"/>
<evidence type="ECO:0000256" key="2">
    <source>
        <dbReference type="SAM" id="MobiDB-lite"/>
    </source>
</evidence>
<evidence type="ECO:0000305" key="3"/>
<name>HIR2_KLULA</name>
<gene>
    <name type="primary">HIR2</name>
    <name type="ordered locus">KLLA0E21945g</name>
</gene>
<protein>
    <recommendedName>
        <fullName>Protein HIR2</fullName>
    </recommendedName>
</protein>
<organism>
    <name type="scientific">Kluyveromyces lactis (strain ATCC 8585 / CBS 2359 / DSM 70799 / NBRC 1267 / NRRL Y-1140 / WM37)</name>
    <name type="common">Yeast</name>
    <name type="synonym">Candida sphaerica</name>
    <dbReference type="NCBI Taxonomy" id="284590"/>
    <lineage>
        <taxon>Eukaryota</taxon>
        <taxon>Fungi</taxon>
        <taxon>Dikarya</taxon>
        <taxon>Ascomycota</taxon>
        <taxon>Saccharomycotina</taxon>
        <taxon>Saccharomycetes</taxon>
        <taxon>Saccharomycetales</taxon>
        <taxon>Saccharomycetaceae</taxon>
        <taxon>Kluyveromyces</taxon>
    </lineage>
</organism>